<accession>Q1LI51</accession>
<name>RS8_CUPMC</name>
<feature type="chain" id="PRO_0000290909" description="Small ribosomal subunit protein uS8">
    <location>
        <begin position="1"/>
        <end position="131"/>
    </location>
</feature>
<protein>
    <recommendedName>
        <fullName evidence="1">Small ribosomal subunit protein uS8</fullName>
    </recommendedName>
    <alternativeName>
        <fullName evidence="2">30S ribosomal protein S8</fullName>
    </alternativeName>
</protein>
<sequence length="131" mass="14107">MSMSDPIADMLTRIRNAQGVQKASVVMPSSKLKAAIAKVLKDEGYVEDFSVQEEGGKAQLTIGLKYYAGRPVIERIERVSKPGLRVYKGRSDIPHVMNGLGVAIISTPQGLMTDRKARATGVGGEVLCYVA</sequence>
<gene>
    <name evidence="1" type="primary">rpsH</name>
    <name type="ordered locus">Rmet_3303</name>
</gene>
<reference key="1">
    <citation type="journal article" date="2010" name="PLoS ONE">
        <title>The complete genome sequence of Cupriavidus metallidurans strain CH34, a master survivalist in harsh and anthropogenic environments.</title>
        <authorList>
            <person name="Janssen P.J."/>
            <person name="Van Houdt R."/>
            <person name="Moors H."/>
            <person name="Monsieurs P."/>
            <person name="Morin N."/>
            <person name="Michaux A."/>
            <person name="Benotmane M.A."/>
            <person name="Leys N."/>
            <person name="Vallaeys T."/>
            <person name="Lapidus A."/>
            <person name="Monchy S."/>
            <person name="Medigue C."/>
            <person name="Taghavi S."/>
            <person name="McCorkle S."/>
            <person name="Dunn J."/>
            <person name="van der Lelie D."/>
            <person name="Mergeay M."/>
        </authorList>
    </citation>
    <scope>NUCLEOTIDE SEQUENCE [LARGE SCALE GENOMIC DNA]</scope>
    <source>
        <strain>ATCC 43123 / DSM 2839 / NBRC 102507 / CH34</strain>
    </source>
</reference>
<keyword id="KW-1185">Reference proteome</keyword>
<keyword id="KW-0687">Ribonucleoprotein</keyword>
<keyword id="KW-0689">Ribosomal protein</keyword>
<keyword id="KW-0694">RNA-binding</keyword>
<keyword id="KW-0699">rRNA-binding</keyword>
<comment type="function">
    <text evidence="1">One of the primary rRNA binding proteins, it binds directly to 16S rRNA central domain where it helps coordinate assembly of the platform of the 30S subunit.</text>
</comment>
<comment type="subunit">
    <text evidence="1">Part of the 30S ribosomal subunit. Contacts proteins S5 and S12.</text>
</comment>
<comment type="similarity">
    <text evidence="1">Belongs to the universal ribosomal protein uS8 family.</text>
</comment>
<dbReference type="EMBL" id="CP000352">
    <property type="protein sequence ID" value="ABF10175.1"/>
    <property type="molecule type" value="Genomic_DNA"/>
</dbReference>
<dbReference type="RefSeq" id="WP_011517767.1">
    <property type="nucleotide sequence ID" value="NC_007973.1"/>
</dbReference>
<dbReference type="SMR" id="Q1LI51"/>
<dbReference type="STRING" id="266264.Rmet_3303"/>
<dbReference type="KEGG" id="rme:Rmet_3303"/>
<dbReference type="eggNOG" id="COG0096">
    <property type="taxonomic scope" value="Bacteria"/>
</dbReference>
<dbReference type="HOGENOM" id="CLU_098428_0_0_4"/>
<dbReference type="Proteomes" id="UP000002429">
    <property type="component" value="Chromosome"/>
</dbReference>
<dbReference type="GO" id="GO:1990904">
    <property type="term" value="C:ribonucleoprotein complex"/>
    <property type="evidence" value="ECO:0007669"/>
    <property type="project" value="UniProtKB-KW"/>
</dbReference>
<dbReference type="GO" id="GO:0005840">
    <property type="term" value="C:ribosome"/>
    <property type="evidence" value="ECO:0007669"/>
    <property type="project" value="UniProtKB-KW"/>
</dbReference>
<dbReference type="GO" id="GO:0019843">
    <property type="term" value="F:rRNA binding"/>
    <property type="evidence" value="ECO:0007669"/>
    <property type="project" value="UniProtKB-UniRule"/>
</dbReference>
<dbReference type="GO" id="GO:0003735">
    <property type="term" value="F:structural constituent of ribosome"/>
    <property type="evidence" value="ECO:0007669"/>
    <property type="project" value="InterPro"/>
</dbReference>
<dbReference type="GO" id="GO:0006412">
    <property type="term" value="P:translation"/>
    <property type="evidence" value="ECO:0007669"/>
    <property type="project" value="UniProtKB-UniRule"/>
</dbReference>
<dbReference type="FunFam" id="3.30.1370.30:FF:000002">
    <property type="entry name" value="30S ribosomal protein S8"/>
    <property type="match status" value="1"/>
</dbReference>
<dbReference type="FunFam" id="3.30.1490.10:FF:000001">
    <property type="entry name" value="30S ribosomal protein S8"/>
    <property type="match status" value="1"/>
</dbReference>
<dbReference type="Gene3D" id="3.30.1370.30">
    <property type="match status" value="1"/>
</dbReference>
<dbReference type="Gene3D" id="3.30.1490.10">
    <property type="match status" value="1"/>
</dbReference>
<dbReference type="HAMAP" id="MF_01302_B">
    <property type="entry name" value="Ribosomal_uS8_B"/>
    <property type="match status" value="1"/>
</dbReference>
<dbReference type="InterPro" id="IPR000630">
    <property type="entry name" value="Ribosomal_uS8"/>
</dbReference>
<dbReference type="InterPro" id="IPR047863">
    <property type="entry name" value="Ribosomal_uS8_CS"/>
</dbReference>
<dbReference type="InterPro" id="IPR035987">
    <property type="entry name" value="Ribosomal_uS8_sf"/>
</dbReference>
<dbReference type="NCBIfam" id="NF001109">
    <property type="entry name" value="PRK00136.1"/>
    <property type="match status" value="1"/>
</dbReference>
<dbReference type="PANTHER" id="PTHR11758">
    <property type="entry name" value="40S RIBOSOMAL PROTEIN S15A"/>
    <property type="match status" value="1"/>
</dbReference>
<dbReference type="Pfam" id="PF00410">
    <property type="entry name" value="Ribosomal_S8"/>
    <property type="match status" value="1"/>
</dbReference>
<dbReference type="SUPFAM" id="SSF56047">
    <property type="entry name" value="Ribosomal protein S8"/>
    <property type="match status" value="1"/>
</dbReference>
<dbReference type="PROSITE" id="PS00053">
    <property type="entry name" value="RIBOSOMAL_S8"/>
    <property type="match status" value="1"/>
</dbReference>
<proteinExistence type="inferred from homology"/>
<organism>
    <name type="scientific">Cupriavidus metallidurans (strain ATCC 43123 / DSM 2839 / NBRC 102507 / CH34)</name>
    <name type="common">Ralstonia metallidurans</name>
    <dbReference type="NCBI Taxonomy" id="266264"/>
    <lineage>
        <taxon>Bacteria</taxon>
        <taxon>Pseudomonadati</taxon>
        <taxon>Pseudomonadota</taxon>
        <taxon>Betaproteobacteria</taxon>
        <taxon>Burkholderiales</taxon>
        <taxon>Burkholderiaceae</taxon>
        <taxon>Cupriavidus</taxon>
    </lineage>
</organism>
<evidence type="ECO:0000255" key="1">
    <source>
        <dbReference type="HAMAP-Rule" id="MF_01302"/>
    </source>
</evidence>
<evidence type="ECO:0000305" key="2"/>